<accession>B1VAD7</accession>
<dbReference type="EMBL" id="AM422018">
    <property type="protein sequence ID" value="CAM11910.1"/>
    <property type="molecule type" value="Genomic_DNA"/>
</dbReference>
<dbReference type="SMR" id="B1VAD7"/>
<dbReference type="STRING" id="59748.PA0576"/>
<dbReference type="KEGG" id="pal:PA0576"/>
<dbReference type="eggNOG" id="COG0198">
    <property type="taxonomic scope" value="Bacteria"/>
</dbReference>
<dbReference type="Proteomes" id="UP000008323">
    <property type="component" value="Chromosome"/>
</dbReference>
<dbReference type="GO" id="GO:1990904">
    <property type="term" value="C:ribonucleoprotein complex"/>
    <property type="evidence" value="ECO:0007669"/>
    <property type="project" value="UniProtKB-KW"/>
</dbReference>
<dbReference type="GO" id="GO:0005840">
    <property type="term" value="C:ribosome"/>
    <property type="evidence" value="ECO:0007669"/>
    <property type="project" value="UniProtKB-KW"/>
</dbReference>
<dbReference type="GO" id="GO:0019843">
    <property type="term" value="F:rRNA binding"/>
    <property type="evidence" value="ECO:0007669"/>
    <property type="project" value="UniProtKB-UniRule"/>
</dbReference>
<dbReference type="GO" id="GO:0003735">
    <property type="term" value="F:structural constituent of ribosome"/>
    <property type="evidence" value="ECO:0007669"/>
    <property type="project" value="InterPro"/>
</dbReference>
<dbReference type="GO" id="GO:0006412">
    <property type="term" value="P:translation"/>
    <property type="evidence" value="ECO:0007669"/>
    <property type="project" value="UniProtKB-UniRule"/>
</dbReference>
<dbReference type="CDD" id="cd06089">
    <property type="entry name" value="KOW_RPL26"/>
    <property type="match status" value="1"/>
</dbReference>
<dbReference type="Gene3D" id="2.30.30.30">
    <property type="match status" value="1"/>
</dbReference>
<dbReference type="HAMAP" id="MF_01326_B">
    <property type="entry name" value="Ribosomal_uL24_B"/>
    <property type="match status" value="1"/>
</dbReference>
<dbReference type="InterPro" id="IPR014722">
    <property type="entry name" value="Rib_uL2_dom2"/>
</dbReference>
<dbReference type="InterPro" id="IPR003256">
    <property type="entry name" value="Ribosomal_uL24"/>
</dbReference>
<dbReference type="InterPro" id="IPR041988">
    <property type="entry name" value="Ribosomal_uL24_KOW"/>
</dbReference>
<dbReference type="InterPro" id="IPR008991">
    <property type="entry name" value="Translation_prot_SH3-like_sf"/>
</dbReference>
<dbReference type="NCBIfam" id="TIGR01079">
    <property type="entry name" value="rplX_bact"/>
    <property type="match status" value="1"/>
</dbReference>
<dbReference type="PANTHER" id="PTHR12903">
    <property type="entry name" value="MITOCHONDRIAL RIBOSOMAL PROTEIN L24"/>
    <property type="match status" value="1"/>
</dbReference>
<dbReference type="Pfam" id="PF17136">
    <property type="entry name" value="ribosomal_L24"/>
    <property type="match status" value="1"/>
</dbReference>
<dbReference type="SUPFAM" id="SSF50104">
    <property type="entry name" value="Translation proteins SH3-like domain"/>
    <property type="match status" value="1"/>
</dbReference>
<name>RL24_PHYAS</name>
<reference key="1">
    <citation type="journal article" date="2008" name="J. Bacteriol.">
        <title>Comparative genome analysis of 'Candidatus Phytoplasma australiense' (subgroup tuf-Australia I; rp-A) and 'Ca. Phytoplasma asteris' strains OY-M and AY-WB.</title>
        <authorList>
            <person name="Tran-Nguyen L.T."/>
            <person name="Kube M."/>
            <person name="Schneider B."/>
            <person name="Reinhardt R."/>
            <person name="Gibb K.S."/>
        </authorList>
    </citation>
    <scope>NUCLEOTIDE SEQUENCE [LARGE SCALE GENOMIC DNA]</scope>
</reference>
<gene>
    <name evidence="1" type="primary">rplX</name>
    <name type="ordered locus">PA0576</name>
</gene>
<protein>
    <recommendedName>
        <fullName evidence="1">Large ribosomal subunit protein uL24</fullName>
    </recommendedName>
    <alternativeName>
        <fullName evidence="3">50S ribosomal protein L24</fullName>
    </alternativeName>
</protein>
<keyword id="KW-1185">Reference proteome</keyword>
<keyword id="KW-0687">Ribonucleoprotein</keyword>
<keyword id="KW-0689">Ribosomal protein</keyword>
<keyword id="KW-0694">RNA-binding</keyword>
<keyword id="KW-0699">rRNA-binding</keyword>
<sequence length="115" mass="13038">MRIKVGETVAILAGKDRYFIDENGQRKVKTGKVLKIFNEKQRIIVEGVNMKTKHHPPSKDQEKGSITKQEGSIHISNVALIDPKTQTPTKIGIRFKKGKKIRYAKKSNNQLDDIV</sequence>
<organism>
    <name type="scientific">Phytoplasma australiense</name>
    <dbReference type="NCBI Taxonomy" id="59748"/>
    <lineage>
        <taxon>Bacteria</taxon>
        <taxon>Bacillati</taxon>
        <taxon>Mycoplasmatota</taxon>
        <taxon>Mollicutes</taxon>
        <taxon>Acholeplasmatales</taxon>
        <taxon>Acholeplasmataceae</taxon>
        <taxon>Candidatus Phytoplasma</taxon>
        <taxon>16SrXII (Stolbur group)</taxon>
    </lineage>
</organism>
<comment type="function">
    <text evidence="1">One of two assembly initiator proteins, it binds directly to the 5'-end of the 23S rRNA, where it nucleates assembly of the 50S subunit.</text>
</comment>
<comment type="function">
    <text evidence="1">One of the proteins that surrounds the polypeptide exit tunnel on the outside of the subunit.</text>
</comment>
<comment type="subunit">
    <text evidence="1">Part of the 50S ribosomal subunit.</text>
</comment>
<comment type="similarity">
    <text evidence="1">Belongs to the universal ribosomal protein uL24 family.</text>
</comment>
<proteinExistence type="inferred from homology"/>
<feature type="chain" id="PRO_1000142020" description="Large ribosomal subunit protein uL24">
    <location>
        <begin position="1"/>
        <end position="115"/>
    </location>
</feature>
<feature type="region of interest" description="Disordered" evidence="2">
    <location>
        <begin position="49"/>
        <end position="68"/>
    </location>
</feature>
<evidence type="ECO:0000255" key="1">
    <source>
        <dbReference type="HAMAP-Rule" id="MF_01326"/>
    </source>
</evidence>
<evidence type="ECO:0000256" key="2">
    <source>
        <dbReference type="SAM" id="MobiDB-lite"/>
    </source>
</evidence>
<evidence type="ECO:0000305" key="3"/>